<name>RSMC_CHRSD</name>
<gene>
    <name evidence="1" type="primary">rsmC</name>
    <name type="ordered locus">Csal_2559</name>
</gene>
<accession>Q1QUF2</accession>
<evidence type="ECO:0000255" key="1">
    <source>
        <dbReference type="HAMAP-Rule" id="MF_01862"/>
    </source>
</evidence>
<protein>
    <recommendedName>
        <fullName evidence="1">Ribosomal RNA small subunit methyltransferase C</fullName>
        <ecNumber evidence="1">2.1.1.172</ecNumber>
    </recommendedName>
    <alternativeName>
        <fullName evidence="1">16S rRNA m2G1207 methyltransferase</fullName>
    </alternativeName>
    <alternativeName>
        <fullName evidence="1">rRNA (guanine-N(2)-)-methyltransferase RsmC</fullName>
    </alternativeName>
</protein>
<organism>
    <name type="scientific">Chromohalobacter salexigens (strain ATCC BAA-138 / DSM 3043 / CIP 106854 / NCIMB 13768 / 1H11)</name>
    <dbReference type="NCBI Taxonomy" id="290398"/>
    <lineage>
        <taxon>Bacteria</taxon>
        <taxon>Pseudomonadati</taxon>
        <taxon>Pseudomonadota</taxon>
        <taxon>Gammaproteobacteria</taxon>
        <taxon>Oceanospirillales</taxon>
        <taxon>Halomonadaceae</taxon>
        <taxon>Chromohalobacter</taxon>
    </lineage>
</organism>
<feature type="chain" id="PRO_0000369691" description="Ribosomal RNA small subunit methyltransferase C">
    <location>
        <begin position="1"/>
        <end position="333"/>
    </location>
</feature>
<dbReference type="EC" id="2.1.1.172" evidence="1"/>
<dbReference type="EMBL" id="CP000285">
    <property type="protein sequence ID" value="ABE59906.1"/>
    <property type="molecule type" value="Genomic_DNA"/>
</dbReference>
<dbReference type="RefSeq" id="WP_011507852.1">
    <property type="nucleotide sequence ID" value="NC_007963.1"/>
</dbReference>
<dbReference type="SMR" id="Q1QUF2"/>
<dbReference type="STRING" id="290398.Csal_2559"/>
<dbReference type="GeneID" id="95335263"/>
<dbReference type="KEGG" id="csa:Csal_2559"/>
<dbReference type="eggNOG" id="COG2813">
    <property type="taxonomic scope" value="Bacteria"/>
</dbReference>
<dbReference type="HOGENOM" id="CLU_049581_0_0_6"/>
<dbReference type="OrthoDB" id="29650at2"/>
<dbReference type="Proteomes" id="UP000000239">
    <property type="component" value="Chromosome"/>
</dbReference>
<dbReference type="GO" id="GO:0005737">
    <property type="term" value="C:cytoplasm"/>
    <property type="evidence" value="ECO:0007669"/>
    <property type="project" value="UniProtKB-SubCell"/>
</dbReference>
<dbReference type="GO" id="GO:0052914">
    <property type="term" value="F:16S rRNA (guanine(1207)-N(2))-methyltransferase activity"/>
    <property type="evidence" value="ECO:0007669"/>
    <property type="project" value="UniProtKB-EC"/>
</dbReference>
<dbReference type="GO" id="GO:0003676">
    <property type="term" value="F:nucleic acid binding"/>
    <property type="evidence" value="ECO:0007669"/>
    <property type="project" value="InterPro"/>
</dbReference>
<dbReference type="CDD" id="cd02440">
    <property type="entry name" value="AdoMet_MTases"/>
    <property type="match status" value="1"/>
</dbReference>
<dbReference type="Gene3D" id="3.40.50.150">
    <property type="entry name" value="Vaccinia Virus protein VP39"/>
    <property type="match status" value="2"/>
</dbReference>
<dbReference type="HAMAP" id="MF_01862">
    <property type="entry name" value="16SrRNA_methyltr_C"/>
    <property type="match status" value="1"/>
</dbReference>
<dbReference type="InterPro" id="IPR002052">
    <property type="entry name" value="DNA_methylase_N6_adenine_CS"/>
</dbReference>
<dbReference type="InterPro" id="IPR013675">
    <property type="entry name" value="Mtase_sm_N"/>
</dbReference>
<dbReference type="InterPro" id="IPR023543">
    <property type="entry name" value="rRNA_ssu_MeTfrase_C"/>
</dbReference>
<dbReference type="InterPro" id="IPR046977">
    <property type="entry name" value="RsmC/RlmG"/>
</dbReference>
<dbReference type="InterPro" id="IPR029063">
    <property type="entry name" value="SAM-dependent_MTases_sf"/>
</dbReference>
<dbReference type="InterPro" id="IPR007848">
    <property type="entry name" value="Small_mtfrase_dom"/>
</dbReference>
<dbReference type="PANTHER" id="PTHR47816">
    <property type="entry name" value="RIBOSOMAL RNA SMALL SUBUNIT METHYLTRANSFERASE C"/>
    <property type="match status" value="1"/>
</dbReference>
<dbReference type="PANTHER" id="PTHR47816:SF4">
    <property type="entry name" value="RIBOSOMAL RNA SMALL SUBUNIT METHYLTRANSFERASE C"/>
    <property type="match status" value="1"/>
</dbReference>
<dbReference type="Pfam" id="PF05175">
    <property type="entry name" value="MTS"/>
    <property type="match status" value="1"/>
</dbReference>
<dbReference type="Pfam" id="PF08468">
    <property type="entry name" value="MTS_N"/>
    <property type="match status" value="1"/>
</dbReference>
<dbReference type="SUPFAM" id="SSF53335">
    <property type="entry name" value="S-adenosyl-L-methionine-dependent methyltransferases"/>
    <property type="match status" value="1"/>
</dbReference>
<proteinExistence type="inferred from homology"/>
<keyword id="KW-0963">Cytoplasm</keyword>
<keyword id="KW-0489">Methyltransferase</keyword>
<keyword id="KW-1185">Reference proteome</keyword>
<keyword id="KW-0698">rRNA processing</keyword>
<keyword id="KW-0949">S-adenosyl-L-methionine</keyword>
<keyword id="KW-0808">Transferase</keyword>
<sequence>MSAETPPCQLLERQSEAYRDWLWVAPPHDAWLHTVGGSVWSADATICQAWRARGRPVHADLAPTLTAPVPGAVLFWPKTHALGEWWLLALCAALPEGTPLQVVGEHQGGVKRVLKSLAALGLGCRKVDSARRCTLYATRTARLALSPEAAWTRFEAAGLTLESHPGVFGHGKLDDGTRQLLEVLPTALGDPAGQRVLDVGCGDGILGAWLGVRGAQVAAVDLDAFAVAATRRTFQANGVAGEAWQSDVFGDVSGSYDAIVSNPPFHQQRAIDYGPAERLIREAPARLVPGGRLVLVANAFLPYPRWLEDAFGEFTVLADDRRFRVYQAVKTRR</sequence>
<comment type="function">
    <text evidence="1">Specifically methylates the guanine in position 1207 of 16S rRNA in the 30S particle.</text>
</comment>
<comment type="catalytic activity">
    <reaction evidence="1">
        <text>guanosine(1207) in 16S rRNA + S-adenosyl-L-methionine = N(2)-methylguanosine(1207) in 16S rRNA + S-adenosyl-L-homocysteine + H(+)</text>
        <dbReference type="Rhea" id="RHEA:42736"/>
        <dbReference type="Rhea" id="RHEA-COMP:10213"/>
        <dbReference type="Rhea" id="RHEA-COMP:10214"/>
        <dbReference type="ChEBI" id="CHEBI:15378"/>
        <dbReference type="ChEBI" id="CHEBI:57856"/>
        <dbReference type="ChEBI" id="CHEBI:59789"/>
        <dbReference type="ChEBI" id="CHEBI:74269"/>
        <dbReference type="ChEBI" id="CHEBI:74481"/>
        <dbReference type="EC" id="2.1.1.172"/>
    </reaction>
</comment>
<comment type="subunit">
    <text evidence="1">Monomer.</text>
</comment>
<comment type="subcellular location">
    <subcellularLocation>
        <location evidence="1">Cytoplasm</location>
    </subcellularLocation>
</comment>
<comment type="similarity">
    <text evidence="1">Belongs to the methyltransferase superfamily. RsmC family.</text>
</comment>
<reference key="1">
    <citation type="journal article" date="2011" name="Stand. Genomic Sci.">
        <title>Complete genome sequence of the halophilic and highly halotolerant Chromohalobacter salexigens type strain (1H11(T)).</title>
        <authorList>
            <person name="Copeland A."/>
            <person name="O'Connor K."/>
            <person name="Lucas S."/>
            <person name="Lapidus A."/>
            <person name="Berry K.W."/>
            <person name="Detter J.C."/>
            <person name="Del Rio T.G."/>
            <person name="Hammon N."/>
            <person name="Dalin E."/>
            <person name="Tice H."/>
            <person name="Pitluck S."/>
            <person name="Bruce D."/>
            <person name="Goodwin L."/>
            <person name="Han C."/>
            <person name="Tapia R."/>
            <person name="Saunders E."/>
            <person name="Schmutz J."/>
            <person name="Brettin T."/>
            <person name="Larimer F."/>
            <person name="Land M."/>
            <person name="Hauser L."/>
            <person name="Vargas C."/>
            <person name="Nieto J.J."/>
            <person name="Kyrpides N.C."/>
            <person name="Ivanova N."/>
            <person name="Goker M."/>
            <person name="Klenk H.P."/>
            <person name="Csonka L.N."/>
            <person name="Woyke T."/>
        </authorList>
    </citation>
    <scope>NUCLEOTIDE SEQUENCE [LARGE SCALE GENOMIC DNA]</scope>
    <source>
        <strain>ATCC BAA-138 / DSM 3043 / CIP 106854 / NCIMB 13768 / 1H11</strain>
    </source>
</reference>